<protein>
    <recommendedName>
        <fullName evidence="2">Protein archease</fullName>
    </recommendedName>
</protein>
<sequence length="139" mass="16328">MRSFEFFEHTADVGIRAYGKSLEEAFSNAALGVFEVITDTSKVKPIEYREIYLNGYDLENLLYKWIEELLYYYDSELMVFSKFDLMIDQDSMTLEGKAWGEKFNGKIHERRTVVKAMTYHQLSIEKTENGYVITFVVDI</sequence>
<keyword id="KW-0106">Calcium</keyword>
<keyword id="KW-0479">Metal-binding</keyword>
<keyword id="KW-0819">tRNA processing</keyword>
<gene>
    <name type="ordered locus">M1627_1500</name>
</gene>
<feature type="chain" id="PRO_1000213971" description="Protein archease">
    <location>
        <begin position="1"/>
        <end position="139"/>
    </location>
</feature>
<feature type="binding site" evidence="1">
    <location>
        <position position="12"/>
    </location>
    <ligand>
        <name>Ca(2+)</name>
        <dbReference type="ChEBI" id="CHEBI:29108"/>
    </ligand>
</feature>
<feature type="binding site" evidence="1">
    <location>
        <position position="138"/>
    </location>
    <ligand>
        <name>Ca(2+)</name>
        <dbReference type="ChEBI" id="CHEBI:29108"/>
    </ligand>
</feature>
<feature type="binding site" evidence="1">
    <location>
        <position position="139"/>
    </location>
    <ligand>
        <name>Ca(2+)</name>
        <dbReference type="ChEBI" id="CHEBI:29108"/>
    </ligand>
</feature>
<proteinExistence type="inferred from homology"/>
<organism>
    <name type="scientific">Saccharolobus islandicus (strain M.16.27)</name>
    <name type="common">Sulfolobus islandicus</name>
    <dbReference type="NCBI Taxonomy" id="427318"/>
    <lineage>
        <taxon>Archaea</taxon>
        <taxon>Thermoproteota</taxon>
        <taxon>Thermoprotei</taxon>
        <taxon>Sulfolobales</taxon>
        <taxon>Sulfolobaceae</taxon>
        <taxon>Saccharolobus</taxon>
    </lineage>
</organism>
<evidence type="ECO:0000250" key="1"/>
<evidence type="ECO:0000255" key="2">
    <source>
        <dbReference type="HAMAP-Rule" id="MF_01222"/>
    </source>
</evidence>
<dbReference type="EMBL" id="CP001401">
    <property type="protein sequence ID" value="ACP55382.1"/>
    <property type="molecule type" value="Genomic_DNA"/>
</dbReference>
<dbReference type="RefSeq" id="WP_012711448.1">
    <property type="nucleotide sequence ID" value="NC_012632.1"/>
</dbReference>
<dbReference type="SMR" id="C3N5V7"/>
<dbReference type="KEGG" id="sim:M1627_1500"/>
<dbReference type="HOGENOM" id="CLU_111362_3_0_2"/>
<dbReference type="Proteomes" id="UP000002307">
    <property type="component" value="Chromosome"/>
</dbReference>
<dbReference type="GO" id="GO:0005509">
    <property type="term" value="F:calcium ion binding"/>
    <property type="evidence" value="ECO:0007669"/>
    <property type="project" value="UniProtKB-UniRule"/>
</dbReference>
<dbReference type="GO" id="GO:0006388">
    <property type="term" value="P:tRNA splicing, via endonucleolytic cleavage and ligation"/>
    <property type="evidence" value="ECO:0007669"/>
    <property type="project" value="UniProtKB-UniRule"/>
</dbReference>
<dbReference type="Gene3D" id="3.55.10.10">
    <property type="entry name" value="Archease domain"/>
    <property type="match status" value="1"/>
</dbReference>
<dbReference type="HAMAP" id="MF_01222">
    <property type="entry name" value="Archease_arch"/>
    <property type="match status" value="1"/>
</dbReference>
<dbReference type="InterPro" id="IPR002804">
    <property type="entry name" value="Archease"/>
</dbReference>
<dbReference type="InterPro" id="IPR022952">
    <property type="entry name" value="Archease_arc"/>
</dbReference>
<dbReference type="InterPro" id="IPR023572">
    <property type="entry name" value="Archease_dom"/>
</dbReference>
<dbReference type="InterPro" id="IPR036820">
    <property type="entry name" value="Archease_dom_sf"/>
</dbReference>
<dbReference type="NCBIfam" id="NF001617">
    <property type="entry name" value="PRK00407.1"/>
    <property type="match status" value="1"/>
</dbReference>
<dbReference type="PANTHER" id="PTHR12682">
    <property type="entry name" value="ARCHEASE"/>
    <property type="match status" value="1"/>
</dbReference>
<dbReference type="PANTHER" id="PTHR12682:SF11">
    <property type="entry name" value="PROTEIN ARCHEASE"/>
    <property type="match status" value="1"/>
</dbReference>
<dbReference type="Pfam" id="PF01951">
    <property type="entry name" value="Archease"/>
    <property type="match status" value="1"/>
</dbReference>
<dbReference type="SUPFAM" id="SSF69819">
    <property type="entry name" value="MTH1598-like"/>
    <property type="match status" value="1"/>
</dbReference>
<comment type="function">
    <text evidence="1">Activates the tRNA-splicing ligase complex by facilitating the enzymatic turnover of catalytic subunit RtcB. Acts by promoting the guanylylation of RtcB, a key intermediate step in tRNA ligation. Can also alter the NTP specificity of RtcB such that ATP, dGTP or ITP is used efficiently (By similarity).</text>
</comment>
<comment type="similarity">
    <text evidence="2">Belongs to the archease family.</text>
</comment>
<reference key="1">
    <citation type="journal article" date="2009" name="Proc. Natl. Acad. Sci. U.S.A.">
        <title>Biogeography of the Sulfolobus islandicus pan-genome.</title>
        <authorList>
            <person name="Reno M.L."/>
            <person name="Held N.L."/>
            <person name="Fields C.J."/>
            <person name="Burke P.V."/>
            <person name="Whitaker R.J."/>
        </authorList>
    </citation>
    <scope>NUCLEOTIDE SEQUENCE [LARGE SCALE GENOMIC DNA]</scope>
    <source>
        <strain>M.16.27</strain>
    </source>
</reference>
<name>ARCH_SACI3</name>
<accession>C3N5V7</accession>